<reference key="1">
    <citation type="journal article" date="1989" name="Proc. Natl. Acad. Sci. U.S.A.">
        <title>Molecular and biological characterization of a replication competent human immunodeficiency type 2 (HIV-2) proviral clone.</title>
        <authorList>
            <person name="Franchini G."/>
            <person name="Fargnoli K.A."/>
            <person name="Giombini F."/>
            <person name="Jagodzinski L.L."/>
            <person name="de Rossi A."/>
            <person name="Bosch M."/>
            <person name="Biberfeld G."/>
            <person name="Fenyo A.M."/>
            <person name="Albert J."/>
            <person name="Gallo R.C."/>
            <person name="Wong-Staal F."/>
        </authorList>
    </citation>
    <scope>NUCLEOTIDE SEQUENCE [GENOMIC DNA]</scope>
</reference>
<reference key="2">
    <citation type="journal article" date="2005" name="Microbes Infect.">
        <title>Decoding Tat: the biology of HIV Tat posttranslational modifications.</title>
        <authorList>
            <person name="Hetzer C."/>
            <person name="Dormeyer W."/>
            <person name="Schnolzer M."/>
            <person name="Ott M."/>
        </authorList>
    </citation>
    <scope>REVIEW</scope>
    <scope>ALTERNATIVE SPLICING</scope>
</reference>
<sequence length="130" mass="14389">METPLKAPESSLGSYNEPSSRTSEQDVATQELANQGEEILSQLYRPLETCNNKCFCKGCCFHCQLCFLNKGLGICYDRKGRRRRSPKKTKAHSSPASDKSISTRTGNSQTEKKQKKTLGTTLEADPGLGR</sequence>
<feature type="chain" id="PRO_0000085372" description="Protein Tat">
    <location>
        <begin position="1"/>
        <end position="130"/>
    </location>
</feature>
<feature type="region of interest" description="Disordered" evidence="3">
    <location>
        <begin position="1"/>
        <end position="29"/>
    </location>
</feature>
<feature type="region of interest" description="Cysteine-rich" evidence="1">
    <location>
        <begin position="50"/>
        <end position="66"/>
    </location>
</feature>
<feature type="region of interest" description="Core" evidence="1">
    <location>
        <begin position="67"/>
        <end position="77"/>
    </location>
</feature>
<feature type="region of interest" description="Disordered" evidence="3">
    <location>
        <begin position="79"/>
        <end position="130"/>
    </location>
</feature>
<feature type="short sequence motif" description="Nuclear localization signal, and RNA-binding (TAR)" evidence="1">
    <location>
        <begin position="78"/>
        <end position="90"/>
    </location>
</feature>
<feature type="compositionally biased region" description="Polar residues" evidence="3">
    <location>
        <begin position="11"/>
        <end position="29"/>
    </location>
</feature>
<feature type="compositionally biased region" description="Basic residues" evidence="3">
    <location>
        <begin position="79"/>
        <end position="91"/>
    </location>
</feature>
<feature type="compositionally biased region" description="Polar residues" evidence="3">
    <location>
        <begin position="92"/>
        <end position="109"/>
    </location>
</feature>
<feature type="modified residue" description="Phosphothreonine; by host CDK9" evidence="1">
    <location>
        <position position="89"/>
    </location>
</feature>
<feature type="modified residue" description="Phosphoserine; by host CDK9" evidence="1">
    <location>
        <position position="94"/>
    </location>
</feature>
<feature type="splice variant" id="VSP_022445" description="In isoform Short." evidence="4">
    <location>
        <begin position="100"/>
        <end position="130"/>
    </location>
</feature>
<evidence type="ECO:0000250" key="1"/>
<evidence type="ECO:0000250" key="2">
    <source>
        <dbReference type="UniProtKB" id="P04608"/>
    </source>
</evidence>
<evidence type="ECO:0000256" key="3">
    <source>
        <dbReference type="SAM" id="MobiDB-lite"/>
    </source>
</evidence>
<evidence type="ECO:0000305" key="4"/>
<comment type="function">
    <text evidence="2">Transcriptional activator that increases RNA Pol II processivity, thereby increasing the level of full-length viral transcripts. Recognizes a hairpin structure at the 5'-LTR of the nascent viral mRNAs referred to as the transactivation responsive RNA element (TAR) and recruits the cyclin T1-CDK9 complex (P-TEFb complex) that will in turn hyperphosphorylate the RNA polymerase II to allow efficient elongation. The CDK9 component of P-TEFb and other Tat-activated kinases hyperphosphorylate the C-terminus of RNA Pol II that becomes stabilized and much more processive.</text>
</comment>
<comment type="function">
    <text evidence="1">Extracellular circulating Tat can be endocytosed by surrounding uninfected cells via the binding to several surface receptors. Endosomal low pH allows Tat to cross the endosome membrane to enter the cytosol and eventually further translocate into the nucleus, thereby inducing severe cell dysfunctions ranging from cell activation to cell death. Through (By similarity).</text>
</comment>
<comment type="subunit">
    <text evidence="1">Interacts with host CCNT1. Associates with the P-TEFb complex composed at least of Tat, P-TEFb (CDK9 and CCNT1), TAR RNA, RNA Pol II. Interacts with CCNT2; the resulting complex is unable to bind to TAR RNA (By similarity).</text>
</comment>
<comment type="subcellular location">
    <subcellularLocation>
        <location evidence="1">Host nucleus</location>
        <location evidence="1">Host nucleolus</location>
    </subcellularLocation>
</comment>
<comment type="alternative products">
    <event type="alternative splicing"/>
    <isoform>
        <id>P12453-1</id>
        <name>Long</name>
        <sequence type="displayed"/>
    </isoform>
    <isoform>
        <id>P12453-2</id>
        <name>Short</name>
        <sequence type="described" ref="VSP_022445"/>
    </isoform>
</comment>
<comment type="domain">
    <text evidence="1">The Arg-rich RNA-binding region binds the TAR RNA. This region also mediates the nuclear localization (By similarity).</text>
</comment>
<comment type="PTM">
    <text evidence="1">The phosphorylation by CDK9 does not seem to be important for transactivation function.</text>
</comment>
<comment type="miscellaneous">
    <molecule>Isoform Short</molecule>
    <text evidence="4">Expressed in the late stage of the infection cycle, when unspliced viral RNAs are exported to the cytoplasm by the viral Rev protein.</text>
</comment>
<comment type="similarity">
    <text evidence="4">Belongs to the lentiviruses Tat family.</text>
</comment>
<protein>
    <recommendedName>
        <fullName>Protein Tat</fullName>
    </recommendedName>
    <alternativeName>
        <fullName>Transactivating regulatory protein</fullName>
    </alternativeName>
</protein>
<keyword id="KW-0010">Activator</keyword>
<keyword id="KW-0014">AIDS</keyword>
<keyword id="KW-0025">Alternative splicing</keyword>
<keyword id="KW-1048">Host nucleus</keyword>
<keyword id="KW-0945">Host-virus interaction</keyword>
<keyword id="KW-0597">Phosphoprotein</keyword>
<keyword id="KW-0694">RNA-binding</keyword>
<keyword id="KW-0804">Transcription</keyword>
<keyword id="KW-0805">Transcription regulation</keyword>
<organism>
    <name type="scientific">Human immunodeficiency virus type 2 subtype A (isolate SBLISY)</name>
    <name type="common">HIV-2</name>
    <dbReference type="NCBI Taxonomy" id="11718"/>
    <lineage>
        <taxon>Viruses</taxon>
        <taxon>Riboviria</taxon>
        <taxon>Pararnavirae</taxon>
        <taxon>Artverviricota</taxon>
        <taxon>Revtraviricetes</taxon>
        <taxon>Ortervirales</taxon>
        <taxon>Retroviridae</taxon>
        <taxon>Orthoretrovirinae</taxon>
        <taxon>Lentivirus</taxon>
        <taxon>Human immunodeficiency virus 2</taxon>
    </lineage>
</organism>
<proteinExistence type="inferred from homology"/>
<dbReference type="EMBL" id="J04498">
    <property type="protein sequence ID" value="AAB00750.1"/>
    <property type="molecule type" value="Genomic_DNA"/>
</dbReference>
<dbReference type="Proteomes" id="UP000007427">
    <property type="component" value="Segment"/>
</dbReference>
<dbReference type="GO" id="GO:0044196">
    <property type="term" value="C:host cell nucleolus"/>
    <property type="evidence" value="ECO:0007669"/>
    <property type="project" value="UniProtKB-SubCell"/>
</dbReference>
<dbReference type="GO" id="GO:0003723">
    <property type="term" value="F:RNA binding"/>
    <property type="evidence" value="ECO:0007669"/>
    <property type="project" value="UniProtKB-KW"/>
</dbReference>
<dbReference type="GO" id="GO:0001070">
    <property type="term" value="F:RNA-binding transcription regulator activity"/>
    <property type="evidence" value="ECO:0007669"/>
    <property type="project" value="InterPro"/>
</dbReference>
<dbReference type="GO" id="GO:0050434">
    <property type="term" value="P:positive regulation of viral transcription"/>
    <property type="evidence" value="ECO:0007669"/>
    <property type="project" value="InterPro"/>
</dbReference>
<dbReference type="Gene3D" id="4.10.20.10">
    <property type="entry name" value="Tat domain"/>
    <property type="match status" value="1"/>
</dbReference>
<dbReference type="InterPro" id="IPR001831">
    <property type="entry name" value="IV_Tat"/>
</dbReference>
<dbReference type="InterPro" id="IPR036963">
    <property type="entry name" value="Tat_dom_sf"/>
</dbReference>
<dbReference type="Pfam" id="PF00539">
    <property type="entry name" value="Tat"/>
    <property type="match status" value="1"/>
</dbReference>
<dbReference type="PRINTS" id="PR00055">
    <property type="entry name" value="HIVTATDOMAIN"/>
</dbReference>
<name>TAT_HV2SB</name>
<organismHost>
    <name type="scientific">Homo sapiens</name>
    <name type="common">Human</name>
    <dbReference type="NCBI Taxonomy" id="9606"/>
</organismHost>
<accession>P12453</accession>
<gene>
    <name type="primary">tat</name>
</gene>